<evidence type="ECO:0000255" key="1">
    <source>
        <dbReference type="HAMAP-Rule" id="MF_00166"/>
    </source>
</evidence>
<protein>
    <recommendedName>
        <fullName evidence="1">DNA-binding protein Fis</fullName>
    </recommendedName>
</protein>
<reference key="1">
    <citation type="journal article" date="1998" name="J. Bacteriol.">
        <title>Identification and characterization of the fis operon in enteric bacteria.</title>
        <authorList>
            <person name="Beach M.B."/>
            <person name="Osuna R."/>
        </authorList>
    </citation>
    <scope>NUCLEOTIDE SEQUENCE [GENOMIC DNA]</scope>
</reference>
<sequence length="93" mass="10646">MFEQRVNSDVLTVSTVNSQDQVTQKPLRDSVKQALKNYFAQLNGQDVNDLYELVLAEVEQPLLDMVMQYTRGNQTRAALMMGINRGTLRKKLK</sequence>
<accession>O52537</accession>
<comment type="function">
    <text evidence="1">Activates ribosomal RNA transcription. Plays a direct role in upstream activation of rRNA promoters.</text>
</comment>
<comment type="subunit">
    <text evidence="1">Homodimer.</text>
</comment>
<comment type="similarity">
    <text evidence="1">Belongs to the transcriptional regulatory Fis family.</text>
</comment>
<organism>
    <name type="scientific">Klebsiella pneumoniae</name>
    <dbReference type="NCBI Taxonomy" id="573"/>
    <lineage>
        <taxon>Bacteria</taxon>
        <taxon>Pseudomonadati</taxon>
        <taxon>Pseudomonadota</taxon>
        <taxon>Gammaproteobacteria</taxon>
        <taxon>Enterobacterales</taxon>
        <taxon>Enterobacteriaceae</taxon>
        <taxon>Klebsiella/Raoultella group</taxon>
        <taxon>Klebsiella</taxon>
        <taxon>Klebsiella pneumoniae complex</taxon>
    </lineage>
</organism>
<feature type="chain" id="PRO_0000203885" description="DNA-binding protein Fis">
    <location>
        <begin position="1"/>
        <end position="93" status="greater than"/>
    </location>
</feature>
<feature type="DNA-binding region" description="H-T-H motif" evidence="1">
    <location>
        <begin position="74"/>
        <end position="93"/>
    </location>
</feature>
<feature type="non-terminal residue">
    <location>
        <position position="93"/>
    </location>
</feature>
<name>FIS_KLEPN</name>
<dbReference type="EMBL" id="AF040380">
    <property type="protein sequence ID" value="AAC77889.1"/>
    <property type="molecule type" value="Genomic_DNA"/>
</dbReference>
<dbReference type="RefSeq" id="WP_175891787.1">
    <property type="nucleotide sequence ID" value="NZ_CAESWX010000001.1"/>
</dbReference>
<dbReference type="SMR" id="O52537"/>
<dbReference type="GO" id="GO:0043565">
    <property type="term" value="F:sequence-specific DNA binding"/>
    <property type="evidence" value="ECO:0007669"/>
    <property type="project" value="InterPro"/>
</dbReference>
<dbReference type="GO" id="GO:0006355">
    <property type="term" value="P:regulation of DNA-templated transcription"/>
    <property type="evidence" value="ECO:0007669"/>
    <property type="project" value="InterPro"/>
</dbReference>
<dbReference type="FunFam" id="1.10.10.60:FF:000006">
    <property type="entry name" value="DNA-binding protein Fis"/>
    <property type="match status" value="1"/>
</dbReference>
<dbReference type="Gene3D" id="1.10.10.60">
    <property type="entry name" value="Homeodomain-like"/>
    <property type="match status" value="1"/>
</dbReference>
<dbReference type="HAMAP" id="MF_00166">
    <property type="entry name" value="DNA_binding_Fis"/>
    <property type="match status" value="1"/>
</dbReference>
<dbReference type="InterPro" id="IPR005412">
    <property type="entry name" value="Fis_DNA-bd"/>
</dbReference>
<dbReference type="InterPro" id="IPR009057">
    <property type="entry name" value="Homeodomain-like_sf"/>
</dbReference>
<dbReference type="InterPro" id="IPR002197">
    <property type="entry name" value="HTH_Fis"/>
</dbReference>
<dbReference type="InterPro" id="IPR050207">
    <property type="entry name" value="Trans_regulatory_Fis"/>
</dbReference>
<dbReference type="NCBIfam" id="NF001659">
    <property type="entry name" value="PRK00430.1"/>
    <property type="match status" value="1"/>
</dbReference>
<dbReference type="PANTHER" id="PTHR47918">
    <property type="entry name" value="DNA-BINDING PROTEIN FIS"/>
    <property type="match status" value="1"/>
</dbReference>
<dbReference type="PANTHER" id="PTHR47918:SF1">
    <property type="entry name" value="DNA-BINDING PROTEIN FIS"/>
    <property type="match status" value="1"/>
</dbReference>
<dbReference type="Pfam" id="PF02954">
    <property type="entry name" value="HTH_8"/>
    <property type="match status" value="1"/>
</dbReference>
<dbReference type="PIRSF" id="PIRSF002097">
    <property type="entry name" value="DNA-binding_Fis"/>
    <property type="match status" value="1"/>
</dbReference>
<dbReference type="PRINTS" id="PR01591">
    <property type="entry name" value="DNABINDNGFIS"/>
</dbReference>
<dbReference type="PRINTS" id="PR01590">
    <property type="entry name" value="HTHFIS"/>
</dbReference>
<dbReference type="SUPFAM" id="SSF46689">
    <property type="entry name" value="Homeodomain-like"/>
    <property type="match status" value="1"/>
</dbReference>
<keyword id="KW-0010">Activator</keyword>
<keyword id="KW-0238">DNA-binding</keyword>
<keyword id="KW-0804">Transcription</keyword>
<keyword id="KW-0805">Transcription regulation</keyword>
<proteinExistence type="inferred from homology"/>
<gene>
    <name evidence="1" type="primary">fis</name>
</gene>